<dbReference type="EMBL" id="AACD01000141">
    <property type="protein sequence ID" value="EAA59202.1"/>
    <property type="molecule type" value="Genomic_DNA"/>
</dbReference>
<dbReference type="EMBL" id="BN001302">
    <property type="protein sequence ID" value="CBF74050.1"/>
    <property type="molecule type" value="Genomic_DNA"/>
</dbReference>
<dbReference type="RefSeq" id="XP_681449.1">
    <property type="nucleotide sequence ID" value="XM_676357.1"/>
</dbReference>
<dbReference type="SMR" id="Q5AU50"/>
<dbReference type="FunCoup" id="Q5AU50">
    <property type="interactions" value="935"/>
</dbReference>
<dbReference type="STRING" id="227321.Q5AU50"/>
<dbReference type="EnsemblFungi" id="CBF74050">
    <property type="protein sequence ID" value="CBF74050"/>
    <property type="gene ID" value="ANIA_08180"/>
</dbReference>
<dbReference type="KEGG" id="ani:ANIA_08180"/>
<dbReference type="VEuPathDB" id="FungiDB:AN8180"/>
<dbReference type="eggNOG" id="KOG2441">
    <property type="taxonomic scope" value="Eukaryota"/>
</dbReference>
<dbReference type="HOGENOM" id="CLU_006601_2_0_1"/>
<dbReference type="InParanoid" id="Q5AU50"/>
<dbReference type="OMA" id="YGQRRGW"/>
<dbReference type="OrthoDB" id="666364at2759"/>
<dbReference type="Proteomes" id="UP000000560">
    <property type="component" value="Chromosome II"/>
</dbReference>
<dbReference type="GO" id="GO:0071014">
    <property type="term" value="C:post-mRNA release spliceosomal complex"/>
    <property type="evidence" value="ECO:0007669"/>
    <property type="project" value="EnsemblFungi"/>
</dbReference>
<dbReference type="GO" id="GO:0000974">
    <property type="term" value="C:Prp19 complex"/>
    <property type="evidence" value="ECO:0007669"/>
    <property type="project" value="EnsemblFungi"/>
</dbReference>
<dbReference type="GO" id="GO:0060090">
    <property type="term" value="F:molecular adaptor activity"/>
    <property type="evidence" value="ECO:0007669"/>
    <property type="project" value="EnsemblFungi"/>
</dbReference>
<dbReference type="GO" id="GO:0003723">
    <property type="term" value="F:RNA binding"/>
    <property type="evidence" value="ECO:0007669"/>
    <property type="project" value="EnsemblFungi"/>
</dbReference>
<dbReference type="GO" id="GO:0000398">
    <property type="term" value="P:mRNA splicing, via spliceosome"/>
    <property type="evidence" value="ECO:0007669"/>
    <property type="project" value="InterPro"/>
</dbReference>
<dbReference type="InterPro" id="IPR017862">
    <property type="entry name" value="SKI-int_prot_SKIP"/>
</dbReference>
<dbReference type="InterPro" id="IPR004015">
    <property type="entry name" value="SKI-int_prot_SKIP_SNW-dom"/>
</dbReference>
<dbReference type="PANTHER" id="PTHR12096">
    <property type="entry name" value="NUCLEAR PROTEIN SKIP-RELATED"/>
    <property type="match status" value="1"/>
</dbReference>
<dbReference type="Pfam" id="PF02731">
    <property type="entry name" value="SKIP_SNW"/>
    <property type="match status" value="1"/>
</dbReference>
<sequence>MTSIAEGLFKSLPKPKYTGEEEELPQHGQRGPRIVGPGQLDDTQIVLRRTGPPPYGNRAGWRPRAPEDFGDGGAFPEILVAQYPLDMGRKGTQSKSNALAVQVDAEGKVKYDAIARRGHSDDRIVHASFKDLIPLRQRVDMGEVSLDRPSEEEVQAQMEKTKNALASLVSGAVAAQKPKNVKGGSRAEPTFVRYTPANQMGDTSRKNDRIMKIVERQQDPMEPPKFKHKKIPRGPPSPPPPIMHSPPRKLTAEDQEAWKIPPPVSNWKNPKGYTVPLDKRLAADGRGLQDVSINDKFAQFAEALFTADRHAREEVRLRAQMQQRLAEKEKAQKEEHLRALAQKAREERSRAQSRASHSPSRGRSRSRSYSDASSRSRTPSEDEEAARERERIRRERRQDAERQLRQSRMGTERRIQAMAREQNRDISEKVALGLAKPTQSSETMWDSRLFNQTSGLSTGFNEDNPYDKPLFAAQDAINSIYRPKPQADFDDEADAEGEMSKIQKSNRFEVLGRAKEGFRGAADAEERSGPVQFEKDTADPFGIDSMIADVTGGAGGAGQKRYGIQEAEPDSRGSKRARVDEEN</sequence>
<proteinExistence type="inferred from homology"/>
<organism>
    <name type="scientific">Emericella nidulans (strain FGSC A4 / ATCC 38163 / CBS 112.46 / NRRL 194 / M139)</name>
    <name type="common">Aspergillus nidulans</name>
    <dbReference type="NCBI Taxonomy" id="227321"/>
    <lineage>
        <taxon>Eukaryota</taxon>
        <taxon>Fungi</taxon>
        <taxon>Dikarya</taxon>
        <taxon>Ascomycota</taxon>
        <taxon>Pezizomycotina</taxon>
        <taxon>Eurotiomycetes</taxon>
        <taxon>Eurotiomycetidae</taxon>
        <taxon>Eurotiales</taxon>
        <taxon>Aspergillaceae</taxon>
        <taxon>Aspergillus</taxon>
        <taxon>Aspergillus subgen. Nidulantes</taxon>
    </lineage>
</organism>
<keyword id="KW-0507">mRNA processing</keyword>
<keyword id="KW-0508">mRNA splicing</keyword>
<keyword id="KW-0539">Nucleus</keyword>
<keyword id="KW-1185">Reference proteome</keyword>
<keyword id="KW-0747">Spliceosome</keyword>
<accession>Q5AU50</accession>
<accession>C8V6Z5</accession>
<reference key="1">
    <citation type="journal article" date="2005" name="Nature">
        <title>Sequencing of Aspergillus nidulans and comparative analysis with A. fumigatus and A. oryzae.</title>
        <authorList>
            <person name="Galagan J.E."/>
            <person name="Calvo S.E."/>
            <person name="Cuomo C."/>
            <person name="Ma L.-J."/>
            <person name="Wortman J.R."/>
            <person name="Batzoglou S."/>
            <person name="Lee S.-I."/>
            <person name="Bastuerkmen M."/>
            <person name="Spevak C.C."/>
            <person name="Clutterbuck J."/>
            <person name="Kapitonov V."/>
            <person name="Jurka J."/>
            <person name="Scazzocchio C."/>
            <person name="Farman M.L."/>
            <person name="Butler J."/>
            <person name="Purcell S."/>
            <person name="Harris S."/>
            <person name="Braus G.H."/>
            <person name="Draht O."/>
            <person name="Busch S."/>
            <person name="D'Enfert C."/>
            <person name="Bouchier C."/>
            <person name="Goldman G.H."/>
            <person name="Bell-Pedersen D."/>
            <person name="Griffiths-Jones S."/>
            <person name="Doonan J.H."/>
            <person name="Yu J."/>
            <person name="Vienken K."/>
            <person name="Pain A."/>
            <person name="Freitag M."/>
            <person name="Selker E.U."/>
            <person name="Archer D.B."/>
            <person name="Penalva M.A."/>
            <person name="Oakley B.R."/>
            <person name="Momany M."/>
            <person name="Tanaka T."/>
            <person name="Kumagai T."/>
            <person name="Asai K."/>
            <person name="Machida M."/>
            <person name="Nierman W.C."/>
            <person name="Denning D.W."/>
            <person name="Caddick M.X."/>
            <person name="Hynes M."/>
            <person name="Paoletti M."/>
            <person name="Fischer R."/>
            <person name="Miller B.L."/>
            <person name="Dyer P.S."/>
            <person name="Sachs M.S."/>
            <person name="Osmani S.A."/>
            <person name="Birren B.W."/>
        </authorList>
    </citation>
    <scope>NUCLEOTIDE SEQUENCE [LARGE SCALE GENOMIC DNA]</scope>
    <source>
        <strain>FGSC A4 / ATCC 38163 / CBS 112.46 / NRRL 194 / M139</strain>
    </source>
</reference>
<reference key="2">
    <citation type="journal article" date="2009" name="Fungal Genet. Biol.">
        <title>The 2008 update of the Aspergillus nidulans genome annotation: a community effort.</title>
        <authorList>
            <person name="Wortman J.R."/>
            <person name="Gilsenan J.M."/>
            <person name="Joardar V."/>
            <person name="Deegan J."/>
            <person name="Clutterbuck J."/>
            <person name="Andersen M.R."/>
            <person name="Archer D."/>
            <person name="Bencina M."/>
            <person name="Braus G."/>
            <person name="Coutinho P."/>
            <person name="von Dohren H."/>
            <person name="Doonan J."/>
            <person name="Driessen A.J."/>
            <person name="Durek P."/>
            <person name="Espeso E."/>
            <person name="Fekete E."/>
            <person name="Flipphi M."/>
            <person name="Estrada C.G."/>
            <person name="Geysens S."/>
            <person name="Goldman G."/>
            <person name="de Groot P.W."/>
            <person name="Hansen K."/>
            <person name="Harris S.D."/>
            <person name="Heinekamp T."/>
            <person name="Helmstaedt K."/>
            <person name="Henrissat B."/>
            <person name="Hofmann G."/>
            <person name="Homan T."/>
            <person name="Horio T."/>
            <person name="Horiuchi H."/>
            <person name="James S."/>
            <person name="Jones M."/>
            <person name="Karaffa L."/>
            <person name="Karanyi Z."/>
            <person name="Kato M."/>
            <person name="Keller N."/>
            <person name="Kelly D.E."/>
            <person name="Kiel J.A."/>
            <person name="Kim J.M."/>
            <person name="van der Klei I.J."/>
            <person name="Klis F.M."/>
            <person name="Kovalchuk A."/>
            <person name="Krasevec N."/>
            <person name="Kubicek C.P."/>
            <person name="Liu B."/>
            <person name="Maccabe A."/>
            <person name="Meyer V."/>
            <person name="Mirabito P."/>
            <person name="Miskei M."/>
            <person name="Mos M."/>
            <person name="Mullins J."/>
            <person name="Nelson D.R."/>
            <person name="Nielsen J."/>
            <person name="Oakley B.R."/>
            <person name="Osmani S.A."/>
            <person name="Pakula T."/>
            <person name="Paszewski A."/>
            <person name="Paulsen I."/>
            <person name="Pilsyk S."/>
            <person name="Pocsi I."/>
            <person name="Punt P.J."/>
            <person name="Ram A.F."/>
            <person name="Ren Q."/>
            <person name="Robellet X."/>
            <person name="Robson G."/>
            <person name="Seiboth B."/>
            <person name="van Solingen P."/>
            <person name="Specht T."/>
            <person name="Sun J."/>
            <person name="Taheri-Talesh N."/>
            <person name="Takeshita N."/>
            <person name="Ussery D."/>
            <person name="vanKuyk P.A."/>
            <person name="Visser H."/>
            <person name="van de Vondervoort P.J."/>
            <person name="de Vries R.P."/>
            <person name="Walton J."/>
            <person name="Xiang X."/>
            <person name="Xiong Y."/>
            <person name="Zeng A.P."/>
            <person name="Brandt B.W."/>
            <person name="Cornell M.J."/>
            <person name="van den Hondel C.A."/>
            <person name="Visser J."/>
            <person name="Oliver S.G."/>
            <person name="Turner G."/>
        </authorList>
    </citation>
    <scope>GENOME REANNOTATION</scope>
    <source>
        <strain>FGSC A4 / ATCC 38163 / CBS 112.46 / NRRL 194 / M139</strain>
    </source>
</reference>
<evidence type="ECO:0000250" key="1"/>
<evidence type="ECO:0000256" key="2">
    <source>
        <dbReference type="SAM" id="MobiDB-lite"/>
    </source>
</evidence>
<evidence type="ECO:0000305" key="3"/>
<name>PRP45_EMENI</name>
<feature type="chain" id="PRO_0000084820" description="Pre-mRNA-processing protein 45">
    <location>
        <begin position="1"/>
        <end position="583"/>
    </location>
</feature>
<feature type="region of interest" description="Disordered" evidence="2">
    <location>
        <begin position="1"/>
        <end position="68"/>
    </location>
</feature>
<feature type="region of interest" description="Disordered" evidence="2">
    <location>
        <begin position="177"/>
        <end position="253"/>
    </location>
</feature>
<feature type="region of interest" description="Disordered" evidence="2">
    <location>
        <begin position="321"/>
        <end position="424"/>
    </location>
</feature>
<feature type="region of interest" description="Disordered" evidence="2">
    <location>
        <begin position="519"/>
        <end position="583"/>
    </location>
</feature>
<feature type="compositionally biased region" description="Basic and acidic residues" evidence="2">
    <location>
        <begin position="203"/>
        <end position="225"/>
    </location>
</feature>
<feature type="compositionally biased region" description="Pro residues" evidence="2">
    <location>
        <begin position="233"/>
        <end position="244"/>
    </location>
</feature>
<feature type="compositionally biased region" description="Basic and acidic residues" evidence="2">
    <location>
        <begin position="325"/>
        <end position="350"/>
    </location>
</feature>
<feature type="compositionally biased region" description="Low complexity" evidence="2">
    <location>
        <begin position="367"/>
        <end position="377"/>
    </location>
</feature>
<feature type="compositionally biased region" description="Basic and acidic residues" evidence="2">
    <location>
        <begin position="386"/>
        <end position="424"/>
    </location>
</feature>
<feature type="compositionally biased region" description="Basic and acidic residues" evidence="2">
    <location>
        <begin position="519"/>
        <end position="538"/>
    </location>
</feature>
<feature type="compositionally biased region" description="Basic and acidic residues" evidence="2">
    <location>
        <begin position="569"/>
        <end position="583"/>
    </location>
</feature>
<comment type="function">
    <text evidence="1">Involved in pre-mRNA splicing.</text>
</comment>
<comment type="subunit">
    <text evidence="1">Associated with the spliceosome.</text>
</comment>
<comment type="subcellular location">
    <subcellularLocation>
        <location evidence="1">Nucleus</location>
    </subcellularLocation>
</comment>
<comment type="similarity">
    <text evidence="3">Belongs to the SNW family.</text>
</comment>
<protein>
    <recommendedName>
        <fullName>Pre-mRNA-processing protein 45</fullName>
    </recommendedName>
</protein>
<gene>
    <name type="primary">prp45</name>
    <name type="ORF">AN8180</name>
</gene>